<gene>
    <name evidence="7" type="primary">rimJ</name>
    <name type="ordered locus">b1066</name>
    <name type="ordered locus">JW1053</name>
</gene>
<protein>
    <recommendedName>
        <fullName evidence="8">[Ribosomal protein uS5]-alanine N-acetyltransferase</fullName>
        <ecNumber evidence="5">2.3.1.267</ecNumber>
    </recommendedName>
    <alternativeName>
        <fullName>Acetylating enzyme for N-terminal of ribosomal protein S5</fullName>
    </alternativeName>
</protein>
<dbReference type="EC" id="2.3.1.267" evidence="5"/>
<dbReference type="EMBL" id="X06118">
    <property type="protein sequence ID" value="CAA29490.1"/>
    <property type="molecule type" value="Genomic_DNA"/>
</dbReference>
<dbReference type="EMBL" id="M99278">
    <property type="protein sequence ID" value="AAA24549.1"/>
    <property type="molecule type" value="Genomic_DNA"/>
</dbReference>
<dbReference type="EMBL" id="U00096">
    <property type="protein sequence ID" value="AAC74150.1"/>
    <property type="molecule type" value="Genomic_DNA"/>
</dbReference>
<dbReference type="EMBL" id="AP009048">
    <property type="protein sequence ID" value="BAA35874.1"/>
    <property type="molecule type" value="Genomic_DNA"/>
</dbReference>
<dbReference type="PIR" id="S01084">
    <property type="entry name" value="S01084"/>
</dbReference>
<dbReference type="RefSeq" id="NP_415584.1">
    <property type="nucleotide sequence ID" value="NC_000913.3"/>
</dbReference>
<dbReference type="RefSeq" id="WP_000468186.1">
    <property type="nucleotide sequence ID" value="NZ_STEB01000016.1"/>
</dbReference>
<dbReference type="SMR" id="P0A948"/>
<dbReference type="BioGRID" id="4260076">
    <property type="interactions" value="80"/>
</dbReference>
<dbReference type="DIP" id="DIP-35985N"/>
<dbReference type="FunCoup" id="P0A948">
    <property type="interactions" value="214"/>
</dbReference>
<dbReference type="IntAct" id="P0A948">
    <property type="interactions" value="17"/>
</dbReference>
<dbReference type="STRING" id="511145.b1066"/>
<dbReference type="jPOST" id="P0A948"/>
<dbReference type="PaxDb" id="511145-b1066"/>
<dbReference type="EnsemblBacteria" id="AAC74150">
    <property type="protein sequence ID" value="AAC74150"/>
    <property type="gene ID" value="b1066"/>
</dbReference>
<dbReference type="GeneID" id="93776341"/>
<dbReference type="GeneID" id="946910"/>
<dbReference type="KEGG" id="ecj:JW1053"/>
<dbReference type="KEGG" id="eco:b1066"/>
<dbReference type="KEGG" id="ecoc:C3026_06475"/>
<dbReference type="PATRIC" id="fig|1411691.4.peg.1202"/>
<dbReference type="EchoBASE" id="EB0844"/>
<dbReference type="eggNOG" id="COG1670">
    <property type="taxonomic scope" value="Bacteria"/>
</dbReference>
<dbReference type="HOGENOM" id="CLU_013985_40_1_6"/>
<dbReference type="InParanoid" id="P0A948"/>
<dbReference type="OMA" id="AACIPDN"/>
<dbReference type="OrthoDB" id="9801669at2"/>
<dbReference type="PhylomeDB" id="P0A948"/>
<dbReference type="BioCyc" id="EcoCyc:EG10851-MONOMER"/>
<dbReference type="BioCyc" id="MetaCyc:EG10851-MONOMER"/>
<dbReference type="BRENDA" id="2.3.1.267">
    <property type="organism ID" value="2026"/>
</dbReference>
<dbReference type="PRO" id="PR:P0A948"/>
<dbReference type="Proteomes" id="UP000000625">
    <property type="component" value="Chromosome"/>
</dbReference>
<dbReference type="GO" id="GO:0005737">
    <property type="term" value="C:cytoplasm"/>
    <property type="evidence" value="ECO:0000314"/>
    <property type="project" value="EcoliWiki"/>
</dbReference>
<dbReference type="GO" id="GO:0005829">
    <property type="term" value="C:cytosol"/>
    <property type="evidence" value="ECO:0000314"/>
    <property type="project" value="EcoCyc"/>
</dbReference>
<dbReference type="GO" id="GO:0008080">
    <property type="term" value="F:N-acetyltransferase activity"/>
    <property type="evidence" value="ECO:0000315"/>
    <property type="project" value="EcoliWiki"/>
</dbReference>
<dbReference type="GO" id="GO:1990189">
    <property type="term" value="F:protein N-terminal-serine acetyltransferase activity"/>
    <property type="evidence" value="ECO:0000314"/>
    <property type="project" value="EcoCyc"/>
</dbReference>
<dbReference type="GO" id="GO:0008999">
    <property type="term" value="F:protein-N-terminal-alanine acetyltransferase activity"/>
    <property type="evidence" value="ECO:0000315"/>
    <property type="project" value="EcoliWiki"/>
</dbReference>
<dbReference type="GO" id="GO:0030490">
    <property type="term" value="P:maturation of SSU-rRNA"/>
    <property type="evidence" value="ECO:0000316"/>
    <property type="project" value="EcoCyc"/>
</dbReference>
<dbReference type="GO" id="GO:0036211">
    <property type="term" value="P:protein modification process"/>
    <property type="evidence" value="ECO:0000315"/>
    <property type="project" value="EcoliWiki"/>
</dbReference>
<dbReference type="GO" id="GO:0042254">
    <property type="term" value="P:ribosome biogenesis"/>
    <property type="evidence" value="ECO:0000315"/>
    <property type="project" value="EcoCyc"/>
</dbReference>
<dbReference type="FunFam" id="3.40.630.30:FF:000005">
    <property type="entry name" value="Ribosomal protein alanine acetyltransferase"/>
    <property type="match status" value="1"/>
</dbReference>
<dbReference type="Gene3D" id="3.40.630.30">
    <property type="match status" value="1"/>
</dbReference>
<dbReference type="InterPro" id="IPR016181">
    <property type="entry name" value="Acyl_CoA_acyltransferase"/>
</dbReference>
<dbReference type="InterPro" id="IPR000182">
    <property type="entry name" value="GNAT_dom"/>
</dbReference>
<dbReference type="InterPro" id="IPR051531">
    <property type="entry name" value="N-acetyltransferase"/>
</dbReference>
<dbReference type="NCBIfam" id="NF008072">
    <property type="entry name" value="PRK10809.1"/>
    <property type="match status" value="1"/>
</dbReference>
<dbReference type="PANTHER" id="PTHR43792:SF8">
    <property type="entry name" value="[RIBOSOMAL PROTEIN US5]-ALANINE N-ACETYLTRANSFERASE"/>
    <property type="match status" value="1"/>
</dbReference>
<dbReference type="PANTHER" id="PTHR43792">
    <property type="entry name" value="GNAT FAMILY, PUTATIVE (AFU_ORTHOLOGUE AFUA_3G00765)-RELATED-RELATED"/>
    <property type="match status" value="1"/>
</dbReference>
<dbReference type="Pfam" id="PF13302">
    <property type="entry name" value="Acetyltransf_3"/>
    <property type="match status" value="1"/>
</dbReference>
<dbReference type="SUPFAM" id="SSF55729">
    <property type="entry name" value="Acyl-CoA N-acyltransferases (Nat)"/>
    <property type="match status" value="1"/>
</dbReference>
<dbReference type="PROSITE" id="PS51186">
    <property type="entry name" value="GNAT"/>
    <property type="match status" value="1"/>
</dbReference>
<keyword id="KW-0012">Acyltransferase</keyword>
<keyword id="KW-0963">Cytoplasm</keyword>
<keyword id="KW-1185">Reference proteome</keyword>
<keyword id="KW-0808">Transferase</keyword>
<sequence length="194" mass="22688">MFGYRSNVPKVRLTTDRLVVRLVHDRDAWRLADYYAENRHFLKPWEPVRDESHCYPSGWQARLGMINEFHKQGSAFYFGLFDPDEKEIIGVANFSNVVRGSFHACYLGYSIGQKWQGKGLMFEALTAAIRYMQRTQHIHRIMANYMPHNKRSGDLLARLGFEKEGYAKDYLLIDGQWRDHVLTALTTPDWTPGR</sequence>
<evidence type="ECO:0000255" key="1">
    <source>
        <dbReference type="PROSITE-ProRule" id="PRU00532"/>
    </source>
</evidence>
<evidence type="ECO:0000269" key="2">
    <source>
    </source>
</evidence>
<evidence type="ECO:0000269" key="3">
    <source>
    </source>
</evidence>
<evidence type="ECO:0000269" key="4">
    <source>
    </source>
</evidence>
<evidence type="ECO:0000269" key="5">
    <source>
    </source>
</evidence>
<evidence type="ECO:0000269" key="6">
    <source>
    </source>
</evidence>
<evidence type="ECO:0000303" key="7">
    <source>
    </source>
</evidence>
<evidence type="ECO:0000305" key="8"/>
<feature type="chain" id="PRO_0000074567" description="[Ribosomal protein uS5]-alanine N-acetyltransferase">
    <location>
        <begin position="1"/>
        <end position="194"/>
    </location>
</feature>
<feature type="domain" description="N-acetyltransferase" evidence="1">
    <location>
        <begin position="18"/>
        <end position="188"/>
    </location>
</feature>
<feature type="mutagenesis site" description="Loss of acetyltransferase activity, can still suppress uS5(G28D) defects; when associated with A-105." evidence="3">
    <original>C</original>
    <variation>A</variation>
    <location>
        <position position="54"/>
    </location>
</feature>
<feature type="mutagenesis site" description="Loss of acetyltransferase activity." evidence="3">
    <original>C</original>
    <variation>F</variation>
    <location>
        <position position="54"/>
    </location>
</feature>
<feature type="mutagenesis site" description="Loss of acetyltransferase activity, can still suppress uS5(G28D) defects; when associated with A-54." evidence="3">
    <original>C</original>
    <variation>A</variation>
    <location>
        <position position="105"/>
    </location>
</feature>
<reference key="1">
    <citation type="journal article" date="1987" name="Mol. Gen. Genet.">
        <title>Cloning and nucleotide sequencing of the genes rimI and rimJ which encode enzymes acetylating ribosomal proteins S18 and S5 of Escherichia coli K12.</title>
        <authorList>
            <person name="Yoshikawa A."/>
            <person name="Isono S."/>
            <person name="Sheback A."/>
            <person name="Isono K."/>
        </authorList>
    </citation>
    <scope>NUCLEOTIDE SEQUENCE [GENOMIC DNA]</scope>
    <scope>FUNCTION</scope>
    <scope>CATALYTIC ACTIVITY</scope>
    <source>
        <strain>K12</strain>
    </source>
</reference>
<reference key="2">
    <citation type="journal article" date="1992" name="J. Bacteriol.">
        <title>Thermoregulation of the pap operon: evidence for the involvement of RimJ, the N-terminal acetylase of ribosomal protein S5.</title>
        <authorList>
            <person name="White-Ziegler C.A."/>
            <person name="Low D.A."/>
        </authorList>
    </citation>
    <scope>NUCLEOTIDE SEQUENCE [GENOMIC DNA]</scope>
    <scope>FUNCTION</scope>
    <source>
        <strain>K12</strain>
    </source>
</reference>
<reference key="3">
    <citation type="journal article" date="1996" name="DNA Res.">
        <title>A 718-kb DNA sequence of the Escherichia coli K-12 genome corresponding to the 12.7-28.0 min region on the linkage map.</title>
        <authorList>
            <person name="Oshima T."/>
            <person name="Aiba H."/>
            <person name="Baba T."/>
            <person name="Fujita K."/>
            <person name="Hayashi K."/>
            <person name="Honjo A."/>
            <person name="Ikemoto K."/>
            <person name="Inada T."/>
            <person name="Itoh T."/>
            <person name="Kajihara M."/>
            <person name="Kanai K."/>
            <person name="Kashimoto K."/>
            <person name="Kimura S."/>
            <person name="Kitagawa M."/>
            <person name="Makino K."/>
            <person name="Masuda S."/>
            <person name="Miki T."/>
            <person name="Mizobuchi K."/>
            <person name="Mori H."/>
            <person name="Motomura K."/>
            <person name="Nakamura Y."/>
            <person name="Nashimoto H."/>
            <person name="Nishio Y."/>
            <person name="Saito N."/>
            <person name="Sampei G."/>
            <person name="Seki Y."/>
            <person name="Tagami H."/>
            <person name="Takemoto K."/>
            <person name="Wada C."/>
            <person name="Yamamoto Y."/>
            <person name="Yano M."/>
            <person name="Horiuchi T."/>
        </authorList>
    </citation>
    <scope>NUCLEOTIDE SEQUENCE [LARGE SCALE GENOMIC DNA]</scope>
    <source>
        <strain>K12 / W3110 / ATCC 27325 / DSM 5911</strain>
    </source>
</reference>
<reference key="4">
    <citation type="journal article" date="1997" name="Science">
        <title>The complete genome sequence of Escherichia coli K-12.</title>
        <authorList>
            <person name="Blattner F.R."/>
            <person name="Plunkett G. III"/>
            <person name="Bloch C.A."/>
            <person name="Perna N.T."/>
            <person name="Burland V."/>
            <person name="Riley M."/>
            <person name="Collado-Vides J."/>
            <person name="Glasner J.D."/>
            <person name="Rode C.K."/>
            <person name="Mayhew G.F."/>
            <person name="Gregor J."/>
            <person name="Davis N.W."/>
            <person name="Kirkpatrick H.A."/>
            <person name="Goeden M.A."/>
            <person name="Rose D.J."/>
            <person name="Mau B."/>
            <person name="Shao Y."/>
        </authorList>
    </citation>
    <scope>NUCLEOTIDE SEQUENCE [LARGE SCALE GENOMIC DNA]</scope>
    <source>
        <strain>K12 / MG1655 / ATCC 47076</strain>
    </source>
</reference>
<reference key="5">
    <citation type="journal article" date="2006" name="Mol. Syst. Biol.">
        <title>Highly accurate genome sequences of Escherichia coli K-12 strains MG1655 and W3110.</title>
        <authorList>
            <person name="Hayashi K."/>
            <person name="Morooka N."/>
            <person name="Yamamoto Y."/>
            <person name="Fujita K."/>
            <person name="Isono K."/>
            <person name="Choi S."/>
            <person name="Ohtsubo E."/>
            <person name="Baba T."/>
            <person name="Wanner B.L."/>
            <person name="Mori H."/>
            <person name="Horiuchi T."/>
        </authorList>
    </citation>
    <scope>NUCLEOTIDE SEQUENCE [LARGE SCALE GENOMIC DNA]</scope>
    <source>
        <strain>K12 / W3110 / ATCC 27325 / DSM 5911</strain>
    </source>
</reference>
<reference key="6">
    <citation type="journal article" date="1979" name="J. Mol. Biol.">
        <title>Ribosomal protein modification in Escherichia coli. I. A mutant lacking the N-terminal acetylation of protein S5 exhibits thermosensitivity.</title>
        <authorList>
            <person name="Cumberlidge A.G."/>
            <person name="Isono K."/>
        </authorList>
    </citation>
    <scope>FUNCTION</scope>
    <scope>DISRUPTION PHENOTYPE</scope>
</reference>
<reference key="7">
    <citation type="journal article" date="2008" name="Mol. Microbiol.">
        <title>Suppression of a cold-sensitive mutation in ribosomal protein S5 reveals a role for RimJ in ribosome biogenesis.</title>
        <authorList>
            <person name="Roy-Chaudhuri B."/>
            <person name="Kirthi N."/>
            <person name="Kelley T."/>
            <person name="Culver G.M."/>
        </authorList>
    </citation>
    <scope>FUNCTION IN RIBOSOME BIOGENESIS</scope>
    <scope>OVEREXPRESSION</scope>
    <scope>INTERACTION WITH PRE-30S SUBUNITS</scope>
    <scope>MUTAGENESIS OF CYS-54 AND CYS-105</scope>
</reference>
<reference key="8">
    <citation type="journal article" date="2010" name="Proc. Natl. Acad. Sci. U.S.A.">
        <title>Appropriate maturation and folding of 16S rRNA during 30S subunit biogenesis are critical for translational fidelity.</title>
        <authorList>
            <person name="Roy-Chaudhuri B."/>
            <person name="Kirthi N."/>
            <person name="Culver G.M."/>
        </authorList>
    </citation>
    <scope>FUNCTION IN RIBOSOME BIOGENESIS</scope>
    <scope>OVEREXPRESSION</scope>
</reference>
<comment type="function">
    <text evidence="2 3 4 5 6">Acetylates the N-terminal alanine of ribosomal protein uS5 (PubMed:2828880, PubMed:385889). Also plays a role in maturation of the 30S ribosomal subunit (PubMed:18466225, PubMed:20176963). Plays a role in the temperature regulation of pap pilin transcription (PubMed:1356970).</text>
</comment>
<comment type="catalytic activity">
    <reaction evidence="5">
        <text>N-terminal L-alanyl-[ribosomal protein uS5] + acetyl-CoA = N-terminal N(alpha)-acetyl-L-alanyl-[ribosomal protein uS5] + CoA + H(+)</text>
        <dbReference type="Rhea" id="RHEA:43752"/>
        <dbReference type="Rhea" id="RHEA-COMP:10672"/>
        <dbReference type="Rhea" id="RHEA-COMP:10673"/>
        <dbReference type="ChEBI" id="CHEBI:15378"/>
        <dbReference type="ChEBI" id="CHEBI:57287"/>
        <dbReference type="ChEBI" id="CHEBI:57288"/>
        <dbReference type="ChEBI" id="CHEBI:64718"/>
        <dbReference type="ChEBI" id="CHEBI:83683"/>
        <dbReference type="EC" id="2.3.1.267"/>
    </reaction>
</comment>
<comment type="subunit">
    <text evidence="3">Associates with pre-30S subunits.</text>
</comment>
<comment type="subcellular location">
    <subcellularLocation>
        <location evidence="8">Cytoplasm</location>
    </subcellularLocation>
</comment>
<comment type="disruption phenotype">
    <text evidence="6">Mutation of the gene impairs the acetylation of the N-terminal alanine of ribosomal protein uS5 (PubMed:385889). Mutant is thermosensitive (PubMed:385889).</text>
</comment>
<comment type="miscellaneous">
    <text evidence="3 4">Overexpression suppresses the cold-sensitive phenotype associated with the ribosomal protein uS5 G28D mutation (rpsE).</text>
</comment>
<comment type="similarity">
    <text evidence="8">Belongs to the acetyltransferase family. RimJ subfamily.</text>
</comment>
<organism>
    <name type="scientific">Escherichia coli (strain K12)</name>
    <dbReference type="NCBI Taxonomy" id="83333"/>
    <lineage>
        <taxon>Bacteria</taxon>
        <taxon>Pseudomonadati</taxon>
        <taxon>Pseudomonadota</taxon>
        <taxon>Gammaproteobacteria</taxon>
        <taxon>Enterobacterales</taxon>
        <taxon>Enterobacteriaceae</taxon>
        <taxon>Escherichia</taxon>
    </lineage>
</organism>
<accession>P0A948</accession>
<accession>P09454</accession>
<proteinExistence type="evidence at protein level"/>
<name>RIMJ_ECOLI</name>